<protein>
    <recommendedName>
        <fullName evidence="1">Chaperone protein HscA homolog</fullName>
    </recommendedName>
</protein>
<proteinExistence type="inferred from homology"/>
<organism>
    <name type="scientific">Burkholderia cenocepacia (strain ATCC BAA-245 / DSM 16553 / LMG 16656 / NCTC 13227 / J2315 / CF5610)</name>
    <name type="common">Burkholderia cepacia (strain J2315)</name>
    <dbReference type="NCBI Taxonomy" id="216591"/>
    <lineage>
        <taxon>Bacteria</taxon>
        <taxon>Pseudomonadati</taxon>
        <taxon>Pseudomonadota</taxon>
        <taxon>Betaproteobacteria</taxon>
        <taxon>Burkholderiales</taxon>
        <taxon>Burkholderiaceae</taxon>
        <taxon>Burkholderia</taxon>
        <taxon>Burkholderia cepacia complex</taxon>
    </lineage>
</organism>
<reference key="1">
    <citation type="journal article" date="2009" name="J. Bacteriol.">
        <title>The genome of Burkholderia cenocepacia J2315, an epidemic pathogen of cystic fibrosis patients.</title>
        <authorList>
            <person name="Holden M.T."/>
            <person name="Seth-Smith H.M."/>
            <person name="Crossman L.C."/>
            <person name="Sebaihia M."/>
            <person name="Bentley S.D."/>
            <person name="Cerdeno-Tarraga A.M."/>
            <person name="Thomson N.R."/>
            <person name="Bason N."/>
            <person name="Quail M.A."/>
            <person name="Sharp S."/>
            <person name="Cherevach I."/>
            <person name="Churcher C."/>
            <person name="Goodhead I."/>
            <person name="Hauser H."/>
            <person name="Holroyd N."/>
            <person name="Mungall K."/>
            <person name="Scott P."/>
            <person name="Walker D."/>
            <person name="White B."/>
            <person name="Rose H."/>
            <person name="Iversen P."/>
            <person name="Mil-Homens D."/>
            <person name="Rocha E.P."/>
            <person name="Fialho A.M."/>
            <person name="Baldwin A."/>
            <person name="Dowson C."/>
            <person name="Barrell B.G."/>
            <person name="Govan J.R."/>
            <person name="Vandamme P."/>
            <person name="Hart C.A."/>
            <person name="Mahenthiralingam E."/>
            <person name="Parkhill J."/>
        </authorList>
    </citation>
    <scope>NUCLEOTIDE SEQUENCE [LARGE SCALE GENOMIC DNA]</scope>
    <source>
        <strain>ATCC BAA-245 / DSM 16553 / LMG 16656 / NCTC 13227 / J2315 / CF5610</strain>
    </source>
</reference>
<comment type="function">
    <text evidence="1">Chaperone involved in the maturation of iron-sulfur cluster-containing proteins. Has a low intrinsic ATPase activity which is markedly stimulated by HscB.</text>
</comment>
<comment type="similarity">
    <text evidence="1">Belongs to the heat shock protein 70 family.</text>
</comment>
<evidence type="ECO:0000255" key="1">
    <source>
        <dbReference type="HAMAP-Rule" id="MF_00679"/>
    </source>
</evidence>
<dbReference type="EMBL" id="AM747720">
    <property type="protein sequence ID" value="CAR52495.1"/>
    <property type="molecule type" value="Genomic_DNA"/>
</dbReference>
<dbReference type="RefSeq" id="WP_006481972.1">
    <property type="nucleotide sequence ID" value="NC_011000.1"/>
</dbReference>
<dbReference type="SMR" id="B4EDS3"/>
<dbReference type="KEGG" id="bcj:BCAL2194"/>
<dbReference type="eggNOG" id="COG0443">
    <property type="taxonomic scope" value="Bacteria"/>
</dbReference>
<dbReference type="HOGENOM" id="CLU_005965_2_1_4"/>
<dbReference type="BioCyc" id="BCEN216591:G1G1V-2409-MONOMER"/>
<dbReference type="Proteomes" id="UP000001035">
    <property type="component" value="Chromosome 1"/>
</dbReference>
<dbReference type="GO" id="GO:0005524">
    <property type="term" value="F:ATP binding"/>
    <property type="evidence" value="ECO:0007669"/>
    <property type="project" value="UniProtKB-KW"/>
</dbReference>
<dbReference type="GO" id="GO:0016887">
    <property type="term" value="F:ATP hydrolysis activity"/>
    <property type="evidence" value="ECO:0007669"/>
    <property type="project" value="UniProtKB-UniRule"/>
</dbReference>
<dbReference type="GO" id="GO:0140662">
    <property type="term" value="F:ATP-dependent protein folding chaperone"/>
    <property type="evidence" value="ECO:0007669"/>
    <property type="project" value="InterPro"/>
</dbReference>
<dbReference type="GO" id="GO:0051082">
    <property type="term" value="F:unfolded protein binding"/>
    <property type="evidence" value="ECO:0007669"/>
    <property type="project" value="InterPro"/>
</dbReference>
<dbReference type="GO" id="GO:0016226">
    <property type="term" value="P:iron-sulfur cluster assembly"/>
    <property type="evidence" value="ECO:0007669"/>
    <property type="project" value="InterPro"/>
</dbReference>
<dbReference type="CDD" id="cd10236">
    <property type="entry name" value="ASKHA_NBD_HSP70_HscA"/>
    <property type="match status" value="1"/>
</dbReference>
<dbReference type="FunFam" id="3.30.420.40:FF:000046">
    <property type="entry name" value="Chaperone protein HscA"/>
    <property type="match status" value="1"/>
</dbReference>
<dbReference type="FunFam" id="2.60.34.10:FF:000005">
    <property type="entry name" value="Chaperone protein HscA homolog"/>
    <property type="match status" value="1"/>
</dbReference>
<dbReference type="Gene3D" id="1.20.1270.10">
    <property type="match status" value="1"/>
</dbReference>
<dbReference type="Gene3D" id="3.30.420.40">
    <property type="match status" value="2"/>
</dbReference>
<dbReference type="Gene3D" id="3.90.640.10">
    <property type="entry name" value="Actin, Chain A, domain 4"/>
    <property type="match status" value="1"/>
</dbReference>
<dbReference type="Gene3D" id="2.60.34.10">
    <property type="entry name" value="Substrate Binding Domain Of DNAk, Chain A, domain 1"/>
    <property type="match status" value="1"/>
</dbReference>
<dbReference type="HAMAP" id="MF_00679">
    <property type="entry name" value="HscA"/>
    <property type="match status" value="1"/>
</dbReference>
<dbReference type="InterPro" id="IPR043129">
    <property type="entry name" value="ATPase_NBD"/>
</dbReference>
<dbReference type="InterPro" id="IPR018181">
    <property type="entry name" value="Heat_shock_70_CS"/>
</dbReference>
<dbReference type="InterPro" id="IPR042039">
    <property type="entry name" value="HscA_NBD"/>
</dbReference>
<dbReference type="InterPro" id="IPR029048">
    <property type="entry name" value="HSP70_C_sf"/>
</dbReference>
<dbReference type="InterPro" id="IPR029047">
    <property type="entry name" value="HSP70_peptide-bd_sf"/>
</dbReference>
<dbReference type="InterPro" id="IPR013126">
    <property type="entry name" value="Hsp_70_fam"/>
</dbReference>
<dbReference type="InterPro" id="IPR010236">
    <property type="entry name" value="ISC_FeS_clus_asmbl_HscA"/>
</dbReference>
<dbReference type="NCBIfam" id="TIGR01991">
    <property type="entry name" value="HscA"/>
    <property type="match status" value="1"/>
</dbReference>
<dbReference type="NCBIfam" id="NF003520">
    <property type="entry name" value="PRK05183.1"/>
    <property type="match status" value="1"/>
</dbReference>
<dbReference type="PANTHER" id="PTHR19375">
    <property type="entry name" value="HEAT SHOCK PROTEIN 70KDA"/>
    <property type="match status" value="1"/>
</dbReference>
<dbReference type="Pfam" id="PF00012">
    <property type="entry name" value="HSP70"/>
    <property type="match status" value="1"/>
</dbReference>
<dbReference type="PRINTS" id="PR00301">
    <property type="entry name" value="HEATSHOCK70"/>
</dbReference>
<dbReference type="SUPFAM" id="SSF53067">
    <property type="entry name" value="Actin-like ATPase domain"/>
    <property type="match status" value="2"/>
</dbReference>
<dbReference type="SUPFAM" id="SSF100934">
    <property type="entry name" value="Heat shock protein 70kD (HSP70), C-terminal subdomain"/>
    <property type="match status" value="1"/>
</dbReference>
<dbReference type="SUPFAM" id="SSF100920">
    <property type="entry name" value="Heat shock protein 70kD (HSP70), peptide-binding domain"/>
    <property type="match status" value="1"/>
</dbReference>
<dbReference type="PROSITE" id="PS00297">
    <property type="entry name" value="HSP70_1"/>
    <property type="match status" value="1"/>
</dbReference>
<dbReference type="PROSITE" id="PS00329">
    <property type="entry name" value="HSP70_2"/>
    <property type="match status" value="1"/>
</dbReference>
<dbReference type="PROSITE" id="PS01036">
    <property type="entry name" value="HSP70_3"/>
    <property type="match status" value="1"/>
</dbReference>
<keyword id="KW-0067">ATP-binding</keyword>
<keyword id="KW-0143">Chaperone</keyword>
<keyword id="KW-0547">Nucleotide-binding</keyword>
<accession>B4EDS3</accession>
<name>HSCA_BURCJ</name>
<sequence>MALLQISEPGMAPAPHQRRLAVGIDLGTTNSLVAAVRNSVPEVLPDEAGRVLLPSVVRYLEKGGRRIGHEAKEQAATDPRNTIVSVKRFMGRGKAEVEGAANAPYEFVDAPGMVQIRTIDGVKSPVEVSAEILATLRYRAEDTLGDELVGAVITVPAYFDDAQRQATKDAARLAGLNVLRLLNEPTAAAIAYGLDNAAEGLYAVYDLGGGTFDLSILKLTKGVFEVLAAGGDSALGGDDFDHALFDHVLAQAGIDAKTLAPEDVRLLLDRVRVLKEALSSAPEAALDVTLSSGAHLAPTISHDTFASLVEPLVQRTLTPTRKALRDAQVTPADIKGVVLVGGATRMPVIRDAVAKYFGQPPLVNLDPDQVVALGAAIQADLLAGNRGTGDDWLLLDVIPLSLGVETMGGLVEKIIPRNSTIPIARAQEFTTFKDGQTAMAIHVVQGERELVADCRSLARFELRGIPPMTAGAARIRVTYQVDADGLLSVFAREQQSGVEASVVVKPSYGLADDDIAKMLEDSFKTAEIDMRARALREAQVEAQRMLEATQAALAADGELLDADERAQVDALADALRAVAQGDDTNAIEAATKALADGTDEFAARRMDKSIKRALSGRRLDEI</sequence>
<feature type="chain" id="PRO_1000131668" description="Chaperone protein HscA homolog">
    <location>
        <begin position="1"/>
        <end position="622"/>
    </location>
</feature>
<gene>
    <name evidence="1" type="primary">hscA</name>
    <name type="ordered locus">BceJ2315_21570</name>
    <name type="ORF">BCAL2194</name>
</gene>